<reference key="1">
    <citation type="journal article" date="2000" name="Science">
        <title>The genome sequence of Drosophila melanogaster.</title>
        <authorList>
            <person name="Adams M.D."/>
            <person name="Celniker S.E."/>
            <person name="Holt R.A."/>
            <person name="Evans C.A."/>
            <person name="Gocayne J.D."/>
            <person name="Amanatides P.G."/>
            <person name="Scherer S.E."/>
            <person name="Li P.W."/>
            <person name="Hoskins R.A."/>
            <person name="Galle R.F."/>
            <person name="George R.A."/>
            <person name="Lewis S.E."/>
            <person name="Richards S."/>
            <person name="Ashburner M."/>
            <person name="Henderson S.N."/>
            <person name="Sutton G.G."/>
            <person name="Wortman J.R."/>
            <person name="Yandell M.D."/>
            <person name="Zhang Q."/>
            <person name="Chen L.X."/>
            <person name="Brandon R.C."/>
            <person name="Rogers Y.-H.C."/>
            <person name="Blazej R.G."/>
            <person name="Champe M."/>
            <person name="Pfeiffer B.D."/>
            <person name="Wan K.H."/>
            <person name="Doyle C."/>
            <person name="Baxter E.G."/>
            <person name="Helt G."/>
            <person name="Nelson C.R."/>
            <person name="Miklos G.L.G."/>
            <person name="Abril J.F."/>
            <person name="Agbayani A."/>
            <person name="An H.-J."/>
            <person name="Andrews-Pfannkoch C."/>
            <person name="Baldwin D."/>
            <person name="Ballew R.M."/>
            <person name="Basu A."/>
            <person name="Baxendale J."/>
            <person name="Bayraktaroglu L."/>
            <person name="Beasley E.M."/>
            <person name="Beeson K.Y."/>
            <person name="Benos P.V."/>
            <person name="Berman B.P."/>
            <person name="Bhandari D."/>
            <person name="Bolshakov S."/>
            <person name="Borkova D."/>
            <person name="Botchan M.R."/>
            <person name="Bouck J."/>
            <person name="Brokstein P."/>
            <person name="Brottier P."/>
            <person name="Burtis K.C."/>
            <person name="Busam D.A."/>
            <person name="Butler H."/>
            <person name="Cadieu E."/>
            <person name="Center A."/>
            <person name="Chandra I."/>
            <person name="Cherry J.M."/>
            <person name="Cawley S."/>
            <person name="Dahlke C."/>
            <person name="Davenport L.B."/>
            <person name="Davies P."/>
            <person name="de Pablos B."/>
            <person name="Delcher A."/>
            <person name="Deng Z."/>
            <person name="Mays A.D."/>
            <person name="Dew I."/>
            <person name="Dietz S.M."/>
            <person name="Dodson K."/>
            <person name="Doup L.E."/>
            <person name="Downes M."/>
            <person name="Dugan-Rocha S."/>
            <person name="Dunkov B.C."/>
            <person name="Dunn P."/>
            <person name="Durbin K.J."/>
            <person name="Evangelista C.C."/>
            <person name="Ferraz C."/>
            <person name="Ferriera S."/>
            <person name="Fleischmann W."/>
            <person name="Fosler C."/>
            <person name="Gabrielian A.E."/>
            <person name="Garg N.S."/>
            <person name="Gelbart W.M."/>
            <person name="Glasser K."/>
            <person name="Glodek A."/>
            <person name="Gong F."/>
            <person name="Gorrell J.H."/>
            <person name="Gu Z."/>
            <person name="Guan P."/>
            <person name="Harris M."/>
            <person name="Harris N.L."/>
            <person name="Harvey D.A."/>
            <person name="Heiman T.J."/>
            <person name="Hernandez J.R."/>
            <person name="Houck J."/>
            <person name="Hostin D."/>
            <person name="Houston K.A."/>
            <person name="Howland T.J."/>
            <person name="Wei M.-H."/>
            <person name="Ibegwam C."/>
            <person name="Jalali M."/>
            <person name="Kalush F."/>
            <person name="Karpen G.H."/>
            <person name="Ke Z."/>
            <person name="Kennison J.A."/>
            <person name="Ketchum K.A."/>
            <person name="Kimmel B.E."/>
            <person name="Kodira C.D."/>
            <person name="Kraft C.L."/>
            <person name="Kravitz S."/>
            <person name="Kulp D."/>
            <person name="Lai Z."/>
            <person name="Lasko P."/>
            <person name="Lei Y."/>
            <person name="Levitsky A.A."/>
            <person name="Li J.H."/>
            <person name="Li Z."/>
            <person name="Liang Y."/>
            <person name="Lin X."/>
            <person name="Liu X."/>
            <person name="Mattei B."/>
            <person name="McIntosh T.C."/>
            <person name="McLeod M.P."/>
            <person name="McPherson D."/>
            <person name="Merkulov G."/>
            <person name="Milshina N.V."/>
            <person name="Mobarry C."/>
            <person name="Morris J."/>
            <person name="Moshrefi A."/>
            <person name="Mount S.M."/>
            <person name="Moy M."/>
            <person name="Murphy B."/>
            <person name="Murphy L."/>
            <person name="Muzny D.M."/>
            <person name="Nelson D.L."/>
            <person name="Nelson D.R."/>
            <person name="Nelson K.A."/>
            <person name="Nixon K."/>
            <person name="Nusskern D.R."/>
            <person name="Pacleb J.M."/>
            <person name="Palazzolo M."/>
            <person name="Pittman G.S."/>
            <person name="Pan S."/>
            <person name="Pollard J."/>
            <person name="Puri V."/>
            <person name="Reese M.G."/>
            <person name="Reinert K."/>
            <person name="Remington K."/>
            <person name="Saunders R.D.C."/>
            <person name="Scheeler F."/>
            <person name="Shen H."/>
            <person name="Shue B.C."/>
            <person name="Siden-Kiamos I."/>
            <person name="Simpson M."/>
            <person name="Skupski M.P."/>
            <person name="Smith T.J."/>
            <person name="Spier E."/>
            <person name="Spradling A.C."/>
            <person name="Stapleton M."/>
            <person name="Strong R."/>
            <person name="Sun E."/>
            <person name="Svirskas R."/>
            <person name="Tector C."/>
            <person name="Turner R."/>
            <person name="Venter E."/>
            <person name="Wang A.H."/>
            <person name="Wang X."/>
            <person name="Wang Z.-Y."/>
            <person name="Wassarman D.A."/>
            <person name="Weinstock G.M."/>
            <person name="Weissenbach J."/>
            <person name="Williams S.M."/>
            <person name="Woodage T."/>
            <person name="Worley K.C."/>
            <person name="Wu D."/>
            <person name="Yang S."/>
            <person name="Yao Q.A."/>
            <person name="Ye J."/>
            <person name="Yeh R.-F."/>
            <person name="Zaveri J.S."/>
            <person name="Zhan M."/>
            <person name="Zhang G."/>
            <person name="Zhao Q."/>
            <person name="Zheng L."/>
            <person name="Zheng X.H."/>
            <person name="Zhong F.N."/>
            <person name="Zhong W."/>
            <person name="Zhou X."/>
            <person name="Zhu S.C."/>
            <person name="Zhu X."/>
            <person name="Smith H.O."/>
            <person name="Gibbs R.A."/>
            <person name="Myers E.W."/>
            <person name="Rubin G.M."/>
            <person name="Venter J.C."/>
        </authorList>
    </citation>
    <scope>NUCLEOTIDE SEQUENCE [LARGE SCALE GENOMIC DNA]</scope>
    <source>
        <strain>Berkeley</strain>
    </source>
</reference>
<reference key="2">
    <citation type="journal article" date="2002" name="Genome Biol.">
        <title>Annotation of the Drosophila melanogaster euchromatic genome: a systematic review.</title>
        <authorList>
            <person name="Misra S."/>
            <person name="Crosby M.A."/>
            <person name="Mungall C.J."/>
            <person name="Matthews B.B."/>
            <person name="Campbell K.S."/>
            <person name="Hradecky P."/>
            <person name="Huang Y."/>
            <person name="Kaminker J.S."/>
            <person name="Millburn G.H."/>
            <person name="Prochnik S.E."/>
            <person name="Smith C.D."/>
            <person name="Tupy J.L."/>
            <person name="Whitfield E.J."/>
            <person name="Bayraktaroglu L."/>
            <person name="Berman B.P."/>
            <person name="Bettencourt B.R."/>
            <person name="Celniker S.E."/>
            <person name="de Grey A.D.N.J."/>
            <person name="Drysdale R.A."/>
            <person name="Harris N.L."/>
            <person name="Richter J."/>
            <person name="Russo S."/>
            <person name="Schroeder A.J."/>
            <person name="Shu S.Q."/>
            <person name="Stapleton M."/>
            <person name="Yamada C."/>
            <person name="Ashburner M."/>
            <person name="Gelbart W.M."/>
            <person name="Rubin G.M."/>
            <person name="Lewis S.E."/>
        </authorList>
    </citation>
    <scope>GENOME REANNOTATION</scope>
    <source>
        <strain>Berkeley</strain>
    </source>
</reference>
<reference key="3">
    <citation type="journal article" date="2000" name="Cell">
        <title>An olfactory sensory map in the fly brain.</title>
        <authorList>
            <person name="Vosshall L.B."/>
            <person name="Wong A.M."/>
            <person name="Axel R."/>
        </authorList>
    </citation>
    <scope>TISSUE SPECIFICITY</scope>
</reference>
<proteinExistence type="evidence at transcript level"/>
<dbReference type="EMBL" id="AE014297">
    <property type="protein sequence ID" value="AAF54249.1"/>
    <property type="molecule type" value="Genomic_DNA"/>
</dbReference>
<dbReference type="RefSeq" id="NP_524281.1">
    <property type="nucleotide sequence ID" value="NM_079557.3"/>
</dbReference>
<dbReference type="SMR" id="Q9VHQ2"/>
<dbReference type="FunCoup" id="Q9VHQ2">
    <property type="interactions" value="36"/>
</dbReference>
<dbReference type="STRING" id="7227.FBpp0081361"/>
<dbReference type="PaxDb" id="7227-FBpp0081361"/>
<dbReference type="EnsemblMetazoa" id="FBtr0081872">
    <property type="protein sequence ID" value="FBpp0081361"/>
    <property type="gene ID" value="FBgn0037594"/>
</dbReference>
<dbReference type="GeneID" id="41011"/>
<dbReference type="KEGG" id="dme:Dmel_CG11742"/>
<dbReference type="AGR" id="FB:FBgn0037594"/>
<dbReference type="CTD" id="41011"/>
<dbReference type="FlyBase" id="FBgn0037594">
    <property type="gene designation" value="Or85d"/>
</dbReference>
<dbReference type="VEuPathDB" id="VectorBase:FBgn0037594"/>
<dbReference type="eggNOG" id="ENOG502S54D">
    <property type="taxonomic scope" value="Eukaryota"/>
</dbReference>
<dbReference type="GeneTree" id="ENSGT00560000077544"/>
<dbReference type="HOGENOM" id="CLU_033399_0_0_1"/>
<dbReference type="InParanoid" id="Q9VHQ2"/>
<dbReference type="OMA" id="LFLFCAM"/>
<dbReference type="OrthoDB" id="8185860at2759"/>
<dbReference type="PhylomeDB" id="Q9VHQ2"/>
<dbReference type="BioGRID-ORCS" id="41011">
    <property type="hits" value="0 hits in 1 CRISPR screen"/>
</dbReference>
<dbReference type="GenomeRNAi" id="41011"/>
<dbReference type="PRO" id="PR:Q9VHQ2"/>
<dbReference type="Proteomes" id="UP000000803">
    <property type="component" value="Chromosome 3R"/>
</dbReference>
<dbReference type="Bgee" id="FBgn0037594">
    <property type="expression patterns" value="Expressed in maxillary palp olfactory receptor neuron (Drosophila) and 1 other cell type or tissue"/>
</dbReference>
<dbReference type="ExpressionAtlas" id="Q9VHQ2">
    <property type="expression patterns" value="baseline and differential"/>
</dbReference>
<dbReference type="GO" id="GO:0034703">
    <property type="term" value="C:cation channel complex"/>
    <property type="evidence" value="ECO:0000250"/>
    <property type="project" value="FlyBase"/>
</dbReference>
<dbReference type="GO" id="GO:0032590">
    <property type="term" value="C:dendrite membrane"/>
    <property type="evidence" value="ECO:0000250"/>
    <property type="project" value="FlyBase"/>
</dbReference>
<dbReference type="GO" id="GO:0005886">
    <property type="term" value="C:plasma membrane"/>
    <property type="evidence" value="ECO:0000250"/>
    <property type="project" value="FlyBase"/>
</dbReference>
<dbReference type="GO" id="GO:0170020">
    <property type="term" value="F:ionotropic olfactory receptor activity"/>
    <property type="evidence" value="ECO:0000250"/>
    <property type="project" value="FlyBase"/>
</dbReference>
<dbReference type="GO" id="GO:0005549">
    <property type="term" value="F:odorant binding"/>
    <property type="evidence" value="ECO:0000250"/>
    <property type="project" value="FlyBase"/>
</dbReference>
<dbReference type="GO" id="GO:0004984">
    <property type="term" value="F:olfactory receptor activity"/>
    <property type="evidence" value="ECO:0000318"/>
    <property type="project" value="GO_Central"/>
</dbReference>
<dbReference type="GO" id="GO:0050911">
    <property type="term" value="P:detection of chemical stimulus involved in sensory perception of smell"/>
    <property type="evidence" value="ECO:0000250"/>
    <property type="project" value="FlyBase"/>
</dbReference>
<dbReference type="GO" id="GO:0007165">
    <property type="term" value="P:signal transduction"/>
    <property type="evidence" value="ECO:0007669"/>
    <property type="project" value="UniProtKB-KW"/>
</dbReference>
<dbReference type="InterPro" id="IPR004117">
    <property type="entry name" value="7tm6_olfct_rcpt"/>
</dbReference>
<dbReference type="PANTHER" id="PTHR21137">
    <property type="entry name" value="ODORANT RECEPTOR"/>
    <property type="match status" value="1"/>
</dbReference>
<dbReference type="PANTHER" id="PTHR21137:SF44">
    <property type="entry name" value="ODORANT RECEPTOR 13A-RELATED"/>
    <property type="match status" value="1"/>
</dbReference>
<dbReference type="Pfam" id="PF02949">
    <property type="entry name" value="7tm_6"/>
    <property type="match status" value="1"/>
</dbReference>
<name>OR85D_DROME</name>
<evidence type="ECO:0000250" key="1"/>
<evidence type="ECO:0000255" key="2"/>
<evidence type="ECO:0000269" key="3">
    <source>
    </source>
</evidence>
<evidence type="ECO:0000305" key="4"/>
<keyword id="KW-1003">Cell membrane</keyword>
<keyword id="KW-0472">Membrane</keyword>
<keyword id="KW-0552">Olfaction</keyword>
<keyword id="KW-0675">Receptor</keyword>
<keyword id="KW-1185">Reference proteome</keyword>
<keyword id="KW-0716">Sensory transduction</keyword>
<keyword id="KW-0807">Transducer</keyword>
<keyword id="KW-0812">Transmembrane</keyword>
<keyword id="KW-1133">Transmembrane helix</keyword>
<feature type="chain" id="PRO_0000174277" description="Putative odorant receptor 85d">
    <location>
        <begin position="1"/>
        <end position="412"/>
    </location>
</feature>
<feature type="topological domain" description="Cytoplasmic" evidence="2">
    <location>
        <begin position="1"/>
        <end position="56"/>
    </location>
</feature>
<feature type="transmembrane region" description="Helical; Name=1" evidence="2">
    <location>
        <begin position="57"/>
        <end position="77"/>
    </location>
</feature>
<feature type="topological domain" description="Extracellular" evidence="2">
    <location>
        <begin position="78"/>
        <end position="84"/>
    </location>
</feature>
<feature type="transmembrane region" description="Helical; Name=2" evidence="2">
    <location>
        <begin position="85"/>
        <end position="105"/>
    </location>
</feature>
<feature type="topological domain" description="Cytoplasmic" evidence="2">
    <location>
        <begin position="106"/>
        <end position="152"/>
    </location>
</feature>
<feature type="transmembrane region" description="Helical; Name=3" evidence="2">
    <location>
        <begin position="153"/>
        <end position="173"/>
    </location>
</feature>
<feature type="topological domain" description="Extracellular" evidence="2">
    <location>
        <begin position="174"/>
        <end position="219"/>
    </location>
</feature>
<feature type="transmembrane region" description="Helical; Name=4" evidence="2">
    <location>
        <begin position="220"/>
        <end position="240"/>
    </location>
</feature>
<feature type="topological domain" description="Cytoplasmic" evidence="2">
    <location>
        <begin position="241"/>
        <end position="282"/>
    </location>
</feature>
<feature type="transmembrane region" description="Helical; Name=5" evidence="2">
    <location>
        <begin position="283"/>
        <end position="303"/>
    </location>
</feature>
<feature type="topological domain" description="Extracellular" evidence="2">
    <location>
        <begin position="304"/>
        <end position="314"/>
    </location>
</feature>
<feature type="transmembrane region" description="Helical; Name=6" evidence="2">
    <location>
        <begin position="315"/>
        <end position="335"/>
    </location>
</feature>
<feature type="topological domain" description="Cytoplasmic" evidence="2">
    <location>
        <begin position="336"/>
        <end position="382"/>
    </location>
</feature>
<feature type="transmembrane region" description="Helical; Name=7" evidence="2">
    <location>
        <begin position="383"/>
        <end position="403"/>
    </location>
</feature>
<feature type="topological domain" description="Extracellular" evidence="2">
    <location>
        <begin position="404"/>
        <end position="412"/>
    </location>
</feature>
<comment type="function">
    <text evidence="1">Odorant receptor which mediates acceptance or avoidance behavior, depending on its substrates. The odorant receptor repertoire encodes a large collection of odor stimuli that vary widely in identity, intensity, and duration. May form a complex with Orco to form odorant-sensing units, providing sensitive and prolonged odorant signaling and calcium permeability (By similarity).</text>
</comment>
<comment type="subunit">
    <text evidence="1">Interacts with Orco. Complexes exist early in the endomembrane system in olfactory sensory neurons (OSNs), coupling these complexes to the conserved ciliary trafficking pathway (By similarity).</text>
</comment>
<comment type="subcellular location">
    <subcellularLocation>
        <location evidence="1">Cell membrane</location>
        <topology evidence="1">Multi-pass membrane protein</topology>
    </subcellularLocation>
</comment>
<comment type="tissue specificity">
    <text evidence="3">Expressed in olfactory sensory neurons in the maxillary palp.</text>
</comment>
<comment type="miscellaneous">
    <text>The atypical heteromeric and topological design of the odorant receptors appears to be an insect-specific solution for odor recognition, making the OR/Orco complex an attractive target for the development of highly selective insect repellents to disrupt olfactory-mediated host-seeking behaviors of insect disease vectors. Odor-evoked OR currents are independent of known G-protein-coupled second messenger pathways.</text>
</comment>
<comment type="similarity">
    <text evidence="4">Belongs to the insect chemoreceptor superfamily. Heteromeric odorant receptor channel (TC 1.A.69) family. Or49a subfamily.</text>
</comment>
<protein>
    <recommendedName>
        <fullName>Putative odorant receptor 85d</fullName>
    </recommendedName>
</protein>
<accession>Q9VHQ2</accession>
<gene>
    <name type="primary">Or85d</name>
    <name type="ORF">CG11742</name>
</gene>
<sequence length="412" mass="47987">MLTKKDTQSAKEQEKLKAIPLHSFLKYANVFYLSIGMMAYDHKYSQKWKEVLLHWTFIAQMVNLNTVLISELIYVFLAIGKGSNFLEATMNLSFIGFVIVGDFKIWNISRQRKRLTQVVSRLEELHPQGLAQQEPYNIGHHLSGYSRYSKFYFGMHMVLIWTYNLYWAVYYLVCDFWLGMRQFERMLPYYCWVPWDWSTGYSYYFMYISQNIGGQACLSGQLAADMLMCALVTLVVMHFIRLSAHIESHVAGIGSFQHDLEFLQATVAYHQSLIHLCQDINEIFGVSLLSNFVSSSFIICFVGFQMTIGSKIDNLVMLVLFLFCAMVQVFMIATHAQRLVDASEQIGQAVYNHDWFRADLRYRKMLILIIKRAQQPSRLKATMFLNISLVTVSDLLQLSYKFFALLRTMYVN</sequence>
<organism>
    <name type="scientific">Drosophila melanogaster</name>
    <name type="common">Fruit fly</name>
    <dbReference type="NCBI Taxonomy" id="7227"/>
    <lineage>
        <taxon>Eukaryota</taxon>
        <taxon>Metazoa</taxon>
        <taxon>Ecdysozoa</taxon>
        <taxon>Arthropoda</taxon>
        <taxon>Hexapoda</taxon>
        <taxon>Insecta</taxon>
        <taxon>Pterygota</taxon>
        <taxon>Neoptera</taxon>
        <taxon>Endopterygota</taxon>
        <taxon>Diptera</taxon>
        <taxon>Brachycera</taxon>
        <taxon>Muscomorpha</taxon>
        <taxon>Ephydroidea</taxon>
        <taxon>Drosophilidae</taxon>
        <taxon>Drosophila</taxon>
        <taxon>Sophophora</taxon>
    </lineage>
</organism>